<comment type="function">
    <text evidence="5 7">Voltage-gated, high-affinity calcium channel that functions together with MID1 to mediate calcium entry into cells (PubMed:10958666, PubMed:9343395). Required during conditions of environmental stress (PubMed:10958666, PubMed:9343395).</text>
</comment>
<comment type="subunit">
    <text evidence="5">Interacts with MID1 to form a Ca(2+) influx channel.</text>
</comment>
<comment type="subcellular location">
    <subcellularLocation>
        <location evidence="5">Cell membrane</location>
        <topology evidence="1">Multi-pass membrane protein</topology>
    </subcellularLocation>
</comment>
<comment type="disruption phenotype">
    <text evidence="6">Growth defect at high temperature, in the presence of lithium, and during calcium starvation.</text>
</comment>
<comment type="similarity">
    <text evidence="8">Belongs to the calcium channel alpha-1 subunit (TC 1.A.1.11) family.</text>
</comment>
<proteinExistence type="evidence at protein level"/>
<feature type="chain" id="PRO_0000054106" description="Calcium-channel protein CCH1">
    <location>
        <begin position="1"/>
        <end position="2039"/>
    </location>
</feature>
<feature type="transmembrane region" description="Helical" evidence="1">
    <location>
        <begin position="346"/>
        <end position="366"/>
    </location>
</feature>
<feature type="transmembrane region" description="Helical" evidence="1">
    <location>
        <begin position="384"/>
        <end position="404"/>
    </location>
</feature>
<feature type="transmembrane region" description="Helical" evidence="1">
    <location>
        <begin position="563"/>
        <end position="583"/>
    </location>
</feature>
<feature type="transmembrane region" description="Helical" evidence="1">
    <location>
        <begin position="658"/>
        <end position="678"/>
    </location>
</feature>
<feature type="transmembrane region" description="Helical" evidence="1">
    <location>
        <begin position="691"/>
        <end position="711"/>
    </location>
</feature>
<feature type="transmembrane region" description="Helical" evidence="1">
    <location>
        <begin position="766"/>
        <end position="786"/>
    </location>
</feature>
<feature type="transmembrane region" description="Helical" evidence="1">
    <location>
        <begin position="809"/>
        <end position="829"/>
    </location>
</feature>
<feature type="transmembrane region" description="Helical" evidence="1">
    <location>
        <begin position="841"/>
        <end position="861"/>
    </location>
</feature>
<feature type="transmembrane region" description="Helical" evidence="1">
    <location>
        <begin position="904"/>
        <end position="924"/>
    </location>
</feature>
<feature type="transmembrane region" description="Helical" evidence="1">
    <location>
        <begin position="942"/>
        <end position="962"/>
    </location>
</feature>
<feature type="transmembrane region" description="Helical" evidence="1">
    <location>
        <begin position="978"/>
        <end position="998"/>
    </location>
</feature>
<feature type="transmembrane region" description="Helical" evidence="1">
    <location>
        <begin position="1207"/>
        <end position="1227"/>
    </location>
</feature>
<feature type="transmembrane region" description="Helical" evidence="1">
    <location>
        <begin position="1247"/>
        <end position="1267"/>
    </location>
</feature>
<feature type="transmembrane region" description="Helical" evidence="1">
    <location>
        <begin position="1277"/>
        <end position="1297"/>
    </location>
</feature>
<feature type="transmembrane region" description="Helical" evidence="1">
    <location>
        <begin position="1340"/>
        <end position="1360"/>
    </location>
</feature>
<feature type="transmembrane region" description="Helical" evidence="1">
    <location>
        <begin position="1408"/>
        <end position="1428"/>
    </location>
</feature>
<feature type="transmembrane region" description="Helical" evidence="1">
    <location>
        <begin position="1452"/>
        <end position="1472"/>
    </location>
</feature>
<feature type="transmembrane region" description="Helical" evidence="1">
    <location>
        <begin position="1529"/>
        <end position="1549"/>
    </location>
</feature>
<feature type="transmembrane region" description="Helical" evidence="1">
    <location>
        <begin position="1554"/>
        <end position="1574"/>
    </location>
</feature>
<feature type="transmembrane region" description="Helical" evidence="1">
    <location>
        <begin position="1596"/>
        <end position="1616"/>
    </location>
</feature>
<feature type="transmembrane region" description="Helical" evidence="1">
    <location>
        <begin position="1618"/>
        <end position="1638"/>
    </location>
</feature>
<feature type="transmembrane region" description="Helical" evidence="1">
    <location>
        <begin position="1654"/>
        <end position="1674"/>
    </location>
</feature>
<feature type="transmembrane region" description="Helical" evidence="1">
    <location>
        <begin position="1748"/>
        <end position="1768"/>
    </location>
</feature>
<feature type="domain" description="EF-hand" evidence="2">
    <location>
        <begin position="1787"/>
        <end position="1822"/>
    </location>
</feature>
<feature type="region of interest" description="Disordered" evidence="4">
    <location>
        <begin position="1"/>
        <end position="171"/>
    </location>
</feature>
<feature type="region of interest" description="Disordered" evidence="4">
    <location>
        <begin position="206"/>
        <end position="288"/>
    </location>
</feature>
<feature type="region of interest" description="Disordered" evidence="4">
    <location>
        <begin position="2011"/>
        <end position="2039"/>
    </location>
</feature>
<feature type="compositionally biased region" description="Basic and acidic residues" evidence="4">
    <location>
        <begin position="64"/>
        <end position="80"/>
    </location>
</feature>
<feature type="compositionally biased region" description="Low complexity" evidence="4">
    <location>
        <begin position="122"/>
        <end position="132"/>
    </location>
</feature>
<feature type="compositionally biased region" description="Low complexity" evidence="4">
    <location>
        <begin position="147"/>
        <end position="164"/>
    </location>
</feature>
<feature type="compositionally biased region" description="Basic and acidic residues" evidence="4">
    <location>
        <begin position="209"/>
        <end position="226"/>
    </location>
</feature>
<feature type="compositionally biased region" description="Basic residues" evidence="4">
    <location>
        <begin position="271"/>
        <end position="281"/>
    </location>
</feature>
<feature type="compositionally biased region" description="Acidic residues" evidence="4">
    <location>
        <begin position="2021"/>
        <end position="2033"/>
    </location>
</feature>
<feature type="modified residue" description="Phosphoserine" evidence="9">
    <location>
        <position position="284"/>
    </location>
</feature>
<feature type="glycosylation site" description="N-linked (GlcNAc...) asparagine" evidence="3">
    <location>
        <position position="98"/>
    </location>
</feature>
<feature type="glycosylation site" description="N-linked (GlcNAc...) asparagine" evidence="3">
    <location>
        <position position="257"/>
    </location>
</feature>
<feature type="glycosylation site" description="N-linked (GlcNAc...) asparagine" evidence="3">
    <location>
        <position position="269"/>
    </location>
</feature>
<feature type="glycosylation site" description="N-linked (GlcNAc...) asparagine" evidence="3">
    <location>
        <position position="379"/>
    </location>
</feature>
<feature type="glycosylation site" description="N-linked (GlcNAc...) asparagine" evidence="3">
    <location>
        <position position="559"/>
    </location>
</feature>
<feature type="glycosylation site" description="N-linked (GlcNAc...) asparagine" evidence="3">
    <location>
        <position position="754"/>
    </location>
</feature>
<feature type="glycosylation site" description="N-linked (GlcNAc...) asparagine" evidence="3">
    <location>
        <position position="760"/>
    </location>
</feature>
<feature type="glycosylation site" description="N-linked (GlcNAc...) asparagine" evidence="3">
    <location>
        <position position="882"/>
    </location>
</feature>
<feature type="glycosylation site" description="N-linked (GlcNAc...) asparagine" evidence="3">
    <location>
        <position position="900"/>
    </location>
</feature>
<feature type="glycosylation site" description="N-linked (GlcNAc...) asparagine" evidence="3">
    <location>
        <position position="968"/>
    </location>
</feature>
<feature type="glycosylation site" description="N-linked (GlcNAc...) asparagine" evidence="3">
    <location>
        <position position="1153"/>
    </location>
</feature>
<feature type="glycosylation site" description="N-linked (GlcNAc...) asparagine" evidence="3">
    <location>
        <position position="1240"/>
    </location>
</feature>
<feature type="glycosylation site" description="N-linked (GlcNAc...) asparagine" evidence="3">
    <location>
        <position position="1302"/>
    </location>
</feature>
<feature type="glycosylation site" description="N-linked (GlcNAc...) asparagine" evidence="3">
    <location>
        <position position="1433"/>
    </location>
</feature>
<feature type="glycosylation site" description="N-linked (GlcNAc...) asparagine" evidence="3">
    <location>
        <position position="1640"/>
    </location>
</feature>
<feature type="glycosylation site" description="N-linked (GlcNAc...) asparagine" evidence="3">
    <location>
        <position position="1687"/>
    </location>
</feature>
<feature type="glycosylation site" description="N-linked (GlcNAc...) asparagine" evidence="3">
    <location>
        <position position="1732"/>
    </location>
</feature>
<feature type="glycosylation site" description="N-linked (GlcNAc...) asparagine" evidence="3">
    <location>
        <position position="1770"/>
    </location>
</feature>
<feature type="glycosylation site" description="N-linked (GlcNAc...) asparagine" evidence="3">
    <location>
        <position position="1785"/>
    </location>
</feature>
<feature type="sequence conflict" description="In Ref. 4; CAA61165." evidence="8" ref="4">
    <original>R</original>
    <variation>Q</variation>
    <location>
        <position position="1185"/>
    </location>
</feature>
<feature type="sequence conflict" description="In Ref. 4; CAA61165." evidence="8" ref="4">
    <original>I</original>
    <variation>N</variation>
    <location>
        <position position="1203"/>
    </location>
</feature>
<reference key="1">
    <citation type="journal article" date="1997" name="Nature">
        <title>The nucleotide sequence of Saccharomyces cerevisiae chromosome VII.</title>
        <authorList>
            <person name="Tettelin H."/>
            <person name="Agostoni-Carbone M.L."/>
            <person name="Albermann K."/>
            <person name="Albers M."/>
            <person name="Arroyo J."/>
            <person name="Backes U."/>
            <person name="Barreiros T."/>
            <person name="Bertani I."/>
            <person name="Bjourson A.J."/>
            <person name="Brueckner M."/>
            <person name="Bruschi C.V."/>
            <person name="Carignani G."/>
            <person name="Castagnoli L."/>
            <person name="Cerdan E."/>
            <person name="Clemente M.L."/>
            <person name="Coblenz A."/>
            <person name="Coglievina M."/>
            <person name="Coissac E."/>
            <person name="Defoor E."/>
            <person name="Del Bino S."/>
            <person name="Delius H."/>
            <person name="Delneri D."/>
            <person name="de Wergifosse P."/>
            <person name="Dujon B."/>
            <person name="Durand P."/>
            <person name="Entian K.-D."/>
            <person name="Eraso P."/>
            <person name="Escribano V."/>
            <person name="Fabiani L."/>
            <person name="Fartmann B."/>
            <person name="Feroli F."/>
            <person name="Feuermann M."/>
            <person name="Frontali L."/>
            <person name="Garcia-Gonzalez M."/>
            <person name="Garcia-Saez M.I."/>
            <person name="Goffeau A."/>
            <person name="Guerreiro P."/>
            <person name="Hani J."/>
            <person name="Hansen M."/>
            <person name="Hebling U."/>
            <person name="Hernandez K."/>
            <person name="Heumann K."/>
            <person name="Hilger F."/>
            <person name="Hofmann B."/>
            <person name="Indge K.J."/>
            <person name="James C.M."/>
            <person name="Klima R."/>
            <person name="Koetter P."/>
            <person name="Kramer B."/>
            <person name="Kramer W."/>
            <person name="Lauquin G."/>
            <person name="Leuther H."/>
            <person name="Louis E.J."/>
            <person name="Maillier E."/>
            <person name="Marconi A."/>
            <person name="Martegani E."/>
            <person name="Mazon M.J."/>
            <person name="Mazzoni C."/>
            <person name="McReynolds A.D.K."/>
            <person name="Melchioretto P."/>
            <person name="Mewes H.-W."/>
            <person name="Minenkova O."/>
            <person name="Mueller-Auer S."/>
            <person name="Nawrocki A."/>
            <person name="Netter P."/>
            <person name="Neu R."/>
            <person name="Nombela C."/>
            <person name="Oliver S.G."/>
            <person name="Panzeri L."/>
            <person name="Paoluzi S."/>
            <person name="Plevani P."/>
            <person name="Portetelle D."/>
            <person name="Portillo F."/>
            <person name="Potier S."/>
            <person name="Purnelle B."/>
            <person name="Rieger M."/>
            <person name="Riles L."/>
            <person name="Rinaldi T."/>
            <person name="Robben J."/>
            <person name="Rodrigues-Pousada C."/>
            <person name="Rodriguez-Belmonte E."/>
            <person name="Rodriguez-Torres A.M."/>
            <person name="Rose M."/>
            <person name="Ruzzi M."/>
            <person name="Saliola M."/>
            <person name="Sanchez-Perez M."/>
            <person name="Schaefer B."/>
            <person name="Schaefer M."/>
            <person name="Scharfe M."/>
            <person name="Schmidheini T."/>
            <person name="Schreer A."/>
            <person name="Skala J."/>
            <person name="Souciet J.-L."/>
            <person name="Steensma H.Y."/>
            <person name="Talla E."/>
            <person name="Thierry A."/>
            <person name="Vandenbol M."/>
            <person name="van der Aart Q.J.M."/>
            <person name="Van Dyck L."/>
            <person name="Vanoni M."/>
            <person name="Verhasselt P."/>
            <person name="Voet M."/>
            <person name="Volckaert G."/>
            <person name="Wambutt R."/>
            <person name="Watson M.D."/>
            <person name="Weber N."/>
            <person name="Wedler E."/>
            <person name="Wedler H."/>
            <person name="Wipfli P."/>
            <person name="Wolf K."/>
            <person name="Wright L.F."/>
            <person name="Zaccaria P."/>
            <person name="Zimmermann M."/>
            <person name="Zollner A."/>
            <person name="Kleine K."/>
        </authorList>
    </citation>
    <scope>NUCLEOTIDE SEQUENCE [LARGE SCALE GENOMIC DNA]</scope>
    <source>
        <strain>ATCC 204508 / S288c</strain>
    </source>
</reference>
<reference key="2">
    <citation type="journal article" date="2014" name="G3 (Bethesda)">
        <title>The reference genome sequence of Saccharomyces cerevisiae: Then and now.</title>
        <authorList>
            <person name="Engel S.R."/>
            <person name="Dietrich F.S."/>
            <person name="Fisk D.G."/>
            <person name="Binkley G."/>
            <person name="Balakrishnan R."/>
            <person name="Costanzo M.C."/>
            <person name="Dwight S.S."/>
            <person name="Hitz B.C."/>
            <person name="Karra K."/>
            <person name="Nash R.S."/>
            <person name="Weng S."/>
            <person name="Wong E.D."/>
            <person name="Lloyd P."/>
            <person name="Skrzypek M.S."/>
            <person name="Miyasato S.R."/>
            <person name="Simison M."/>
            <person name="Cherry J.M."/>
        </authorList>
    </citation>
    <scope>GENOME REANNOTATION</scope>
    <source>
        <strain>ATCC 204508 / S288c</strain>
    </source>
</reference>
<reference key="3">
    <citation type="journal article" date="1996" name="Yeast">
        <title>Sequence analysis of the 43 kb CRM1-YLM9-PET54-DIE2-SMI1-PHO81-YHB4-PFK1 region from the right arm of Saccharomyces cerevisiae chromosome VII.</title>
        <authorList>
            <person name="van der Aart Q.J.M."/>
            <person name="Kleine K."/>
            <person name="Steensma H.Y."/>
        </authorList>
    </citation>
    <scope>NUCLEOTIDE SEQUENCE [GENOMIC DNA] OF 1184-2039</scope>
    <source>
        <strain>ATCC 204508 / S288c</strain>
    </source>
</reference>
<reference key="4">
    <citation type="journal article" date="1997" name="Yeast">
        <title>Sequence analysis of 203 kilobases from Saccharomyces cerevisiae chromosome VII.</title>
        <authorList>
            <person name="Rieger M."/>
            <person name="Brueckner M."/>
            <person name="Schaefer M."/>
            <person name="Mueller-Auer S."/>
        </authorList>
    </citation>
    <scope>NUCLEOTIDE SEQUENCE [GENOMIC DNA] OF 1184-2039</scope>
    <source>
        <strain>ATCC 204508 / S288c</strain>
    </source>
</reference>
<reference key="5">
    <citation type="journal article" date="1997" name="Mol. Cell. Biol.">
        <title>A homolog of mammalian, voltage-gated calcium channels mediates yeast pheromone-stimulated Ca2+ uptake and exacerbates the cdc1(Ts) growth defect.</title>
        <authorList>
            <person name="Paidhungat M."/>
            <person name="Garrett S."/>
        </authorList>
    </citation>
    <scope>FUNCTION</scope>
</reference>
<reference key="6">
    <citation type="journal article" date="2000" name="Mol. Cell. Biol.">
        <title>A homolog of voltage-gated Ca(2+) channels stimulated by depletion of secretory Ca(2+) in yeast.</title>
        <authorList>
            <person name="Locke E.G."/>
            <person name="Bonilla M."/>
            <person name="Liang L."/>
            <person name="Takita Y."/>
            <person name="Cunningham K.W."/>
        </authorList>
    </citation>
    <scope>FUNCTION</scope>
    <scope>INTERACTION WITH MID1</scope>
    <scope>SUBCELLULAR LOCATION</scope>
</reference>
<reference key="7">
    <citation type="journal article" date="2006" name="Eukaryot. Cell">
        <title>Cch1 mediates calcium entry in Cryptococcus neoformans and is essential in low-calcium environments.</title>
        <authorList>
            <person name="Liu M."/>
            <person name="Du P."/>
            <person name="Heinrich G."/>
            <person name="Cox G.M."/>
            <person name="Gelli A."/>
        </authorList>
    </citation>
    <scope>DISRUPTION PHENOTYPE</scope>
</reference>
<reference key="8">
    <citation type="journal article" date="2007" name="Proc. Natl. Acad. Sci. U.S.A.">
        <title>Analysis of phosphorylation sites on proteins from Saccharomyces cerevisiae by electron transfer dissociation (ETD) mass spectrometry.</title>
        <authorList>
            <person name="Chi A."/>
            <person name="Huttenhower C."/>
            <person name="Geer L.Y."/>
            <person name="Coon J.J."/>
            <person name="Syka J.E.P."/>
            <person name="Bai D.L."/>
            <person name="Shabanowitz J."/>
            <person name="Burke D.J."/>
            <person name="Troyanskaya O.G."/>
            <person name="Hunt D.F."/>
        </authorList>
    </citation>
    <scope>PHOSPHORYLATION [LARGE SCALE ANALYSIS] AT SER-284</scope>
    <scope>IDENTIFICATION BY MASS SPECTROMETRY [LARGE SCALE ANALYSIS]</scope>
</reference>
<reference key="9">
    <citation type="journal article" date="2008" name="Mol. Cell. Proteomics">
        <title>A multidimensional chromatography technology for in-depth phosphoproteome analysis.</title>
        <authorList>
            <person name="Albuquerque C.P."/>
            <person name="Smolka M.B."/>
            <person name="Payne S.H."/>
            <person name="Bafna V."/>
            <person name="Eng J."/>
            <person name="Zhou H."/>
        </authorList>
    </citation>
    <scope>IDENTIFICATION BY MASS SPECTROMETRY [LARGE SCALE ANALYSIS]</scope>
</reference>
<accession>P50077</accession>
<accession>D6VV00</accession>
<protein>
    <recommendedName>
        <fullName>Calcium-channel protein CCH1</fullName>
    </recommendedName>
</protein>
<keyword id="KW-0106">Calcium</keyword>
<keyword id="KW-0107">Calcium channel</keyword>
<keyword id="KW-0109">Calcium transport</keyword>
<keyword id="KW-1003">Cell membrane</keyword>
<keyword id="KW-0325">Glycoprotein</keyword>
<keyword id="KW-0407">Ion channel</keyword>
<keyword id="KW-0406">Ion transport</keyword>
<keyword id="KW-0472">Membrane</keyword>
<keyword id="KW-0597">Phosphoprotein</keyword>
<keyword id="KW-1185">Reference proteome</keyword>
<keyword id="KW-0346">Stress response</keyword>
<keyword id="KW-0812">Transmembrane</keyword>
<keyword id="KW-1133">Transmembrane helix</keyword>
<keyword id="KW-0813">Transport</keyword>
<keyword id="KW-0851">Voltage-gated channel</keyword>
<dbReference type="EMBL" id="Z73002">
    <property type="protein sequence ID" value="CAA97244.1"/>
    <property type="molecule type" value="Genomic_DNA"/>
</dbReference>
<dbReference type="EMBL" id="Z73003">
    <property type="protein sequence ID" value="CAA97245.1"/>
    <property type="molecule type" value="Genomic_DNA"/>
</dbReference>
<dbReference type="EMBL" id="X87941">
    <property type="protein sequence ID" value="CAA61165.1"/>
    <property type="molecule type" value="Genomic_DNA"/>
</dbReference>
<dbReference type="EMBL" id="BK006941">
    <property type="protein sequence ID" value="DAA08311.1"/>
    <property type="molecule type" value="Genomic_DNA"/>
</dbReference>
<dbReference type="PIR" id="S64540">
    <property type="entry name" value="S64540"/>
</dbReference>
<dbReference type="RefSeq" id="NP_011733.3">
    <property type="nucleotide sequence ID" value="NM_001181346.3"/>
</dbReference>
<dbReference type="BioGRID" id="33470">
    <property type="interactions" value="169"/>
</dbReference>
<dbReference type="FunCoup" id="P50077">
    <property type="interactions" value="144"/>
</dbReference>
<dbReference type="IntAct" id="P50077">
    <property type="interactions" value="15"/>
</dbReference>
<dbReference type="MINT" id="P50077"/>
<dbReference type="STRING" id="4932.YGR217W"/>
<dbReference type="TCDB" id="1.A.1.11.10">
    <property type="family name" value="the voltage-gated ion channel (vic) superfamily"/>
</dbReference>
<dbReference type="GlyGen" id="P50077">
    <property type="glycosylation" value="1 site"/>
</dbReference>
<dbReference type="iPTMnet" id="P50077"/>
<dbReference type="PaxDb" id="4932-YGR217W"/>
<dbReference type="PeptideAtlas" id="P50077"/>
<dbReference type="EnsemblFungi" id="YGR217W_mRNA">
    <property type="protein sequence ID" value="YGR217W"/>
    <property type="gene ID" value="YGR217W"/>
</dbReference>
<dbReference type="GeneID" id="853131"/>
<dbReference type="KEGG" id="sce:YGR217W"/>
<dbReference type="AGR" id="SGD:S000003449"/>
<dbReference type="SGD" id="S000003449">
    <property type="gene designation" value="CCH1"/>
</dbReference>
<dbReference type="VEuPathDB" id="FungiDB:YGR217W"/>
<dbReference type="eggNOG" id="KOG2301">
    <property type="taxonomic scope" value="Eukaryota"/>
</dbReference>
<dbReference type="GeneTree" id="ENSGT00940000170242"/>
<dbReference type="HOGENOM" id="CLU_000443_2_0_1"/>
<dbReference type="InParanoid" id="P50077"/>
<dbReference type="OMA" id="TLFIAWN"/>
<dbReference type="OrthoDB" id="416585at2759"/>
<dbReference type="BioCyc" id="YEAST:G3O-30899-MONOMER"/>
<dbReference type="Reactome" id="R-SCE-445355">
    <property type="pathway name" value="Smooth Muscle Contraction"/>
</dbReference>
<dbReference type="BioGRID-ORCS" id="853131">
    <property type="hits" value="5 hits in 10 CRISPR screens"/>
</dbReference>
<dbReference type="PRO" id="PR:P50077"/>
<dbReference type="Proteomes" id="UP000002311">
    <property type="component" value="Chromosome VII"/>
</dbReference>
<dbReference type="RNAct" id="P50077">
    <property type="molecule type" value="protein"/>
</dbReference>
<dbReference type="GO" id="GO:0005886">
    <property type="term" value="C:plasma membrane"/>
    <property type="evidence" value="ECO:0000314"/>
    <property type="project" value="SGD"/>
</dbReference>
<dbReference type="GO" id="GO:0005891">
    <property type="term" value="C:voltage-gated calcium channel complex"/>
    <property type="evidence" value="ECO:0000318"/>
    <property type="project" value="GO_Central"/>
</dbReference>
<dbReference type="GO" id="GO:0005262">
    <property type="term" value="F:calcium channel activity"/>
    <property type="evidence" value="ECO:0000314"/>
    <property type="project" value="SGD"/>
</dbReference>
<dbReference type="GO" id="GO:0005509">
    <property type="term" value="F:calcium ion binding"/>
    <property type="evidence" value="ECO:0007669"/>
    <property type="project" value="InterPro"/>
</dbReference>
<dbReference type="GO" id="GO:0005245">
    <property type="term" value="F:voltage-gated calcium channel activity"/>
    <property type="evidence" value="ECO:0000250"/>
    <property type="project" value="SGD"/>
</dbReference>
<dbReference type="GO" id="GO:0098703">
    <property type="term" value="P:calcium ion import across plasma membrane"/>
    <property type="evidence" value="ECO:0000318"/>
    <property type="project" value="GO_Central"/>
</dbReference>
<dbReference type="GO" id="GO:0006816">
    <property type="term" value="P:calcium ion transport"/>
    <property type="evidence" value="ECO:0000314"/>
    <property type="project" value="SGD"/>
</dbReference>
<dbReference type="FunFam" id="1.10.287.70:FF:000093">
    <property type="entry name" value="Calcium channel subunit Cch1"/>
    <property type="match status" value="1"/>
</dbReference>
<dbReference type="FunFam" id="1.10.287.70:FF:000118">
    <property type="entry name" value="Calcium channel subunit Cch1"/>
    <property type="match status" value="1"/>
</dbReference>
<dbReference type="FunFam" id="1.20.120.350:FF:000063">
    <property type="entry name" value="Calcium channel subunit Cch1"/>
    <property type="match status" value="1"/>
</dbReference>
<dbReference type="Gene3D" id="1.10.287.70">
    <property type="match status" value="4"/>
</dbReference>
<dbReference type="Gene3D" id="1.10.238.10">
    <property type="entry name" value="EF-hand"/>
    <property type="match status" value="1"/>
</dbReference>
<dbReference type="Gene3D" id="1.20.120.350">
    <property type="entry name" value="Voltage-gated potassium channels. Chain C"/>
    <property type="match status" value="2"/>
</dbReference>
<dbReference type="InterPro" id="IPR002048">
    <property type="entry name" value="EF_hand_dom"/>
</dbReference>
<dbReference type="InterPro" id="IPR005821">
    <property type="entry name" value="Ion_trans_dom"/>
</dbReference>
<dbReference type="InterPro" id="IPR050599">
    <property type="entry name" value="VDCC_alpha-1_subunit"/>
</dbReference>
<dbReference type="InterPro" id="IPR027359">
    <property type="entry name" value="Volt_channel_dom_sf"/>
</dbReference>
<dbReference type="PANTHER" id="PTHR45628">
    <property type="entry name" value="VOLTAGE-DEPENDENT CALCIUM CHANNEL TYPE A SUBUNIT ALPHA-1"/>
    <property type="match status" value="1"/>
</dbReference>
<dbReference type="PANTHER" id="PTHR45628:SF7">
    <property type="entry name" value="VOLTAGE-DEPENDENT CALCIUM CHANNEL TYPE A SUBUNIT ALPHA-1"/>
    <property type="match status" value="1"/>
</dbReference>
<dbReference type="Pfam" id="PF00520">
    <property type="entry name" value="Ion_trans"/>
    <property type="match status" value="4"/>
</dbReference>
<dbReference type="SUPFAM" id="SSF81324">
    <property type="entry name" value="Voltage-gated potassium channels"/>
    <property type="match status" value="4"/>
</dbReference>
<dbReference type="PROSITE" id="PS50222">
    <property type="entry name" value="EF_HAND_2"/>
    <property type="match status" value="1"/>
</dbReference>
<organism>
    <name type="scientific">Saccharomyces cerevisiae (strain ATCC 204508 / S288c)</name>
    <name type="common">Baker's yeast</name>
    <dbReference type="NCBI Taxonomy" id="559292"/>
    <lineage>
        <taxon>Eukaryota</taxon>
        <taxon>Fungi</taxon>
        <taxon>Dikarya</taxon>
        <taxon>Ascomycota</taxon>
        <taxon>Saccharomycotina</taxon>
        <taxon>Saccharomycetes</taxon>
        <taxon>Saccharomycetales</taxon>
        <taxon>Saccharomycetaceae</taxon>
        <taxon>Saccharomyces</taxon>
    </lineage>
</organism>
<sequence>MQGRKRTLTEPFEPNTNPFGDNAAVMTENVEDNSETDGNRLESKPQALVPPALNIVPPESSIHSTEEKKGDEYNGNDKDSSLISNIFRTRVGRSSHENLSRPKLSLKTASFGAAESSRRNVSPSTKSAKSSSQYIDLNDERLRRRSFSSYSRSSSRRVSNSPSSTDRPPRSAKVLSLIAADDMDDFEDLQKGFKSAIDEEGLTWLPQLKSEKSRPVSDVGEDRGEGEQESIPDVHTPNVGASATPGSIHLTPEPAQNGSVSEGLEGSINNSRKKPSPKFFHHLSPQKEDKDQTEVIEYAEDILDFETLQRKLESRPFVLYGHSLGVFSPTNPLRIKIARFLLHRRYSLLYNTLLTFYAILLAIRTYNPHNVVFLYRFSNWTDYFIFILSACFTGNDIAKIIAFGFWDDSEMFKAYGREYKSILQRSGIMKLYIYLREKYGRKLIDFIIPFRIISPGEETKYQRSSLSTSLTKPYGAKENQRPFGTPRAFARSSWNRIDLVSSVSFWLGMFLSIKSYDTKTGIRIFKPLAILRILRLVNVDTGMPSILRGLKYGIPQLVNVSSMLVYFWIFFGILGVQIFQGSFRRQCVWFNPEDPTDTYQYDMQFCGGYLDPVTKRKQNYIYEDGSEGSVSKGFLCPQYSKCVSNANPYNGRISFDNIVNSMELVFVIMSANTFTDLMYYTMDSDEMAACLFFIVCIFVLTIWLLNLLIAVLVSSFEIANEEYKKKKFIYGSRKTGYVARIVTGYWKYFKLKANQTKFPNWSQKGLAIYSHVEFIFVILIICDIGMRASVKVSTSANCNNILLKTDRGISIVLFIESLARLVLYLPNMWKFLTKPSYVYDFIISIITLVISCLAVEGVLGHMYAWLSIFHISRFYRVIISFNLTKKLWKQILSNGVMIWNLSSFYFFFTFLVAIIMAVYFEGVIPPEEMADQPFGMYSLPNSFLSLFIIGSTENWTDILYALQKHSPNISSTFFCSVFFIIWFLLSNSVILNIFIALISESMEVKEEEKRPQQIKHYLKFVYPQKIQEYTHASLVARIRKKFFGGHRNEDTRDFKQFLMRGTAIMNIAQNMGELADEFKEPPSENLFKKGLSKLTIGVPSLKRLRMFANNPFYKNSDVVFTETNDINGRTYILELNEYEDEKLDYLKKYPLFNYSYYFFSPQHRFRRFCQRLVPPSTGKRTDGSRFFEDSTDLYNKRSYFHHIERDVFVFIFALATILLIVCSCYVTPLYRMHHKMGTWNWSSALDCAFIGAFSIEFIVKTVADGFIYSPNAYLRNPWNFIDFCVLISMWINLIAYLKNNGNLSRIFKGLTALRALRCLTISNTARQTFNLVMFDGLNKIFEAGLISLSLLFPFTVWGLSIFKGRLGTCNDGSLGRADCYNEYSNSVFQWDIMSPRVYQQPYLHLDSFASAFSSLYQIISLEGWVDLLENMMNSSGIGTPATVMGSAGNALFLVLFNFLSMVFILNLFVSFIVNNQARTTGSAYFTIEEKAWLESQKLLSQAKPKAIPNLIELSRVRQFFYQLAVEKKNFYYASFLQVVLYLHIIMLLSRSYNPGNLIGYQGVYFMFSTSVFLIQEALHMCGEGPRLYFRQKWNSIRLSIIIIAFIMNAVAFHVPASHYWFHNIKGFFLLVIFLFIIPQNDTLTELLETAMASLPPILSLTYTWGVLFLVYAIALNQIFGLTRLGSNTTDNINFRTVIKSMIVLFRCSFGEGWNYIMADLTVSEPYCSSDDNSTYTDCGSETYAYLLLMSWNIISMYIFVNMFVSLIIGNFSYVYRSGGSRSGINRSEIKKYIEAWSKFDTDGTGELELSYLPRIMHSFDGPLSFKIWEGRLTIKSLVENYMEVNPDDPYDVKIDLIGLNKELNTIDKAKIIQRKLQYRRFVQSIHYTNAYNGCIRFSDLLLQIPLYTAYSARECLGIDQYVHHLYILGKVDKYLENQRNFDVLEMVVTRWKFHCRMKRTIEPEWDVKDPTVSSHISNINVNLEPAPGILEREPIATPRMDYGVNNFMWSPRMNQDSTMEPPEEPIDNNDDSANDLIDR</sequence>
<name>CCH1_YEAST</name>
<gene>
    <name type="primary">CCH1</name>
    <name type="ordered locus">YGR217W</name>
    <name type="ORF">G8501</name>
</gene>
<evidence type="ECO:0000255" key="1"/>
<evidence type="ECO:0000255" key="2">
    <source>
        <dbReference type="PROSITE-ProRule" id="PRU00448"/>
    </source>
</evidence>
<evidence type="ECO:0000255" key="3">
    <source>
        <dbReference type="PROSITE-ProRule" id="PRU00498"/>
    </source>
</evidence>
<evidence type="ECO:0000256" key="4">
    <source>
        <dbReference type="SAM" id="MobiDB-lite"/>
    </source>
</evidence>
<evidence type="ECO:0000269" key="5">
    <source>
    </source>
</evidence>
<evidence type="ECO:0000269" key="6">
    <source>
    </source>
</evidence>
<evidence type="ECO:0000269" key="7">
    <source>
    </source>
</evidence>
<evidence type="ECO:0000305" key="8"/>
<evidence type="ECO:0007744" key="9">
    <source>
    </source>
</evidence>